<organism>
    <name type="scientific">Sceloporus woodi</name>
    <name type="common">Florida scrub lizard</name>
    <dbReference type="NCBI Taxonomy" id="59726"/>
    <lineage>
        <taxon>Eukaryota</taxon>
        <taxon>Metazoa</taxon>
        <taxon>Chordata</taxon>
        <taxon>Craniata</taxon>
        <taxon>Vertebrata</taxon>
        <taxon>Euteleostomi</taxon>
        <taxon>Lepidosauria</taxon>
        <taxon>Squamata</taxon>
        <taxon>Bifurcata</taxon>
        <taxon>Unidentata</taxon>
        <taxon>Episquamata</taxon>
        <taxon>Toxicofera</taxon>
        <taxon>Iguania</taxon>
        <taxon>Phrynosomatidae</taxon>
        <taxon>Phrynosomatinae</taxon>
        <taxon>Sceloporus</taxon>
    </lineage>
</organism>
<reference key="1">
    <citation type="journal article" date="1996" name="Gene">
        <title>Sequences of the lizard cDNAs encoding lactate dehydrogenase (LDH) isozymes A (muscle) and B (heart).</title>
        <authorList>
            <person name="Mannen H."/>
            <person name="Tsoi S.C.-M."/>
            <person name="Pickford D.B."/>
            <person name="Donald J.A."/>
            <person name="Guillette L.J."/>
            <person name="Li S.S.-L."/>
        </authorList>
    </citation>
    <scope>NUCLEOTIDE SEQUENCE [MRNA]</scope>
</reference>
<proteinExistence type="evidence at transcript level"/>
<protein>
    <recommendedName>
        <fullName>L-lactate dehydrogenase B chain</fullName>
        <shortName>LDH-B</shortName>
        <ecNumber evidence="2">1.1.1.27</ecNumber>
    </recommendedName>
</protein>
<name>LDHB_SCEWO</name>
<keyword id="KW-0963">Cytoplasm</keyword>
<keyword id="KW-0520">NAD</keyword>
<keyword id="KW-0560">Oxidoreductase</keyword>
<sequence>MASLKDKLITPVAQPATQPTSKVTVVGVGQVGMACAISVLEKGLCDELALVDVLEDKLKGEMMDLQHGSLFLKTNKIVAGKDYAVTANSKVVVVTAGVRQQEGESRLDLVQRNVNVFKFIIPQVVKYSPDCIILVVSNPVDILTYVTWKLSGLPKHRVIGSGCNLDSARFRFLMGERLGIHPSSCHGWILGEHGDSSVAVWSGVNVAGVSLQELNPAMGSDQDSEGWKQVHKQVVDSAYEVIKLKGYTNWAIGLSVADLLETIMKNLCRVHPVSTMVKGMYGIENEVFLSLPCVLGSVGLTSVINQKLKDSEVAQLQTSATTLWNVQKDLKDL</sequence>
<dbReference type="EC" id="1.1.1.27" evidence="2"/>
<dbReference type="EMBL" id="U28411">
    <property type="protein sequence ID" value="AAB53026.1"/>
    <property type="molecule type" value="mRNA"/>
</dbReference>
<dbReference type="SMR" id="P79913"/>
<dbReference type="UniPathway" id="UPA00554">
    <property type="reaction ID" value="UER00611"/>
</dbReference>
<dbReference type="GO" id="GO:0005737">
    <property type="term" value="C:cytoplasm"/>
    <property type="evidence" value="ECO:0007669"/>
    <property type="project" value="UniProtKB-SubCell"/>
</dbReference>
<dbReference type="GO" id="GO:0004459">
    <property type="term" value="F:L-lactate dehydrogenase activity"/>
    <property type="evidence" value="ECO:0007669"/>
    <property type="project" value="UniProtKB-EC"/>
</dbReference>
<dbReference type="GO" id="GO:0006089">
    <property type="term" value="P:lactate metabolic process"/>
    <property type="evidence" value="ECO:0007669"/>
    <property type="project" value="TreeGrafter"/>
</dbReference>
<dbReference type="CDD" id="cd05293">
    <property type="entry name" value="LDH_1"/>
    <property type="match status" value="1"/>
</dbReference>
<dbReference type="FunFam" id="3.40.50.720:FF:000029">
    <property type="entry name" value="L-lactate dehydrogenase A chain"/>
    <property type="match status" value="1"/>
</dbReference>
<dbReference type="FunFam" id="3.90.110.10:FF:000003">
    <property type="entry name" value="L-lactate dehydrogenase A chain"/>
    <property type="match status" value="1"/>
</dbReference>
<dbReference type="Gene3D" id="3.90.110.10">
    <property type="entry name" value="Lactate dehydrogenase/glycoside hydrolase, family 4, C-terminal"/>
    <property type="match status" value="1"/>
</dbReference>
<dbReference type="Gene3D" id="3.40.50.720">
    <property type="entry name" value="NAD(P)-binding Rossmann-like Domain"/>
    <property type="match status" value="1"/>
</dbReference>
<dbReference type="HAMAP" id="MF_00488">
    <property type="entry name" value="Lactate_dehydrog"/>
    <property type="match status" value="1"/>
</dbReference>
<dbReference type="InterPro" id="IPR001557">
    <property type="entry name" value="L-lactate/malate_DH"/>
</dbReference>
<dbReference type="InterPro" id="IPR011304">
    <property type="entry name" value="L-lactate_DH"/>
</dbReference>
<dbReference type="InterPro" id="IPR018177">
    <property type="entry name" value="L-lactate_DH_AS"/>
</dbReference>
<dbReference type="InterPro" id="IPR022383">
    <property type="entry name" value="Lactate/malate_DH_C"/>
</dbReference>
<dbReference type="InterPro" id="IPR001236">
    <property type="entry name" value="Lactate/malate_DH_N"/>
</dbReference>
<dbReference type="InterPro" id="IPR015955">
    <property type="entry name" value="Lactate_DH/Glyco_Ohase_4_C"/>
</dbReference>
<dbReference type="InterPro" id="IPR036291">
    <property type="entry name" value="NAD(P)-bd_dom_sf"/>
</dbReference>
<dbReference type="NCBIfam" id="TIGR01771">
    <property type="entry name" value="L-LDH-NAD"/>
    <property type="match status" value="1"/>
</dbReference>
<dbReference type="NCBIfam" id="NF000824">
    <property type="entry name" value="PRK00066.1"/>
    <property type="match status" value="1"/>
</dbReference>
<dbReference type="PANTHER" id="PTHR43128">
    <property type="entry name" value="L-2-HYDROXYCARBOXYLATE DEHYDROGENASE (NAD(P)(+))"/>
    <property type="match status" value="1"/>
</dbReference>
<dbReference type="PANTHER" id="PTHR43128:SF2">
    <property type="entry name" value="L-LACTATE DEHYDROGENASE B CHAIN"/>
    <property type="match status" value="1"/>
</dbReference>
<dbReference type="Pfam" id="PF02866">
    <property type="entry name" value="Ldh_1_C"/>
    <property type="match status" value="1"/>
</dbReference>
<dbReference type="Pfam" id="PF00056">
    <property type="entry name" value="Ldh_1_N"/>
    <property type="match status" value="1"/>
</dbReference>
<dbReference type="PIRSF" id="PIRSF000102">
    <property type="entry name" value="Lac_mal_DH"/>
    <property type="match status" value="1"/>
</dbReference>
<dbReference type="PRINTS" id="PR00086">
    <property type="entry name" value="LLDHDRGNASE"/>
</dbReference>
<dbReference type="SUPFAM" id="SSF56327">
    <property type="entry name" value="LDH C-terminal domain-like"/>
    <property type="match status" value="1"/>
</dbReference>
<dbReference type="SUPFAM" id="SSF51735">
    <property type="entry name" value="NAD(P)-binding Rossmann-fold domains"/>
    <property type="match status" value="1"/>
</dbReference>
<dbReference type="PROSITE" id="PS00064">
    <property type="entry name" value="L_LDH"/>
    <property type="match status" value="1"/>
</dbReference>
<gene>
    <name type="primary">LDHB</name>
</gene>
<comment type="function">
    <text evidence="2">Interconverts simultaneously and stereospecifically pyruvate and lactate with concomitant interconversion of NADH and NAD(+).</text>
</comment>
<comment type="catalytic activity">
    <reaction evidence="2">
        <text>(S)-lactate + NAD(+) = pyruvate + NADH + H(+)</text>
        <dbReference type="Rhea" id="RHEA:23444"/>
        <dbReference type="ChEBI" id="CHEBI:15361"/>
        <dbReference type="ChEBI" id="CHEBI:15378"/>
        <dbReference type="ChEBI" id="CHEBI:16651"/>
        <dbReference type="ChEBI" id="CHEBI:57540"/>
        <dbReference type="ChEBI" id="CHEBI:57945"/>
        <dbReference type="EC" id="1.1.1.27"/>
    </reaction>
    <physiologicalReaction direction="left-to-right" evidence="2">
        <dbReference type="Rhea" id="RHEA:23445"/>
    </physiologicalReaction>
    <physiologicalReaction direction="right-to-left" evidence="2">
        <dbReference type="Rhea" id="RHEA:23446"/>
    </physiologicalReaction>
</comment>
<comment type="pathway">
    <text evidence="2">Fermentation; pyruvate fermentation to lactate; (S)-lactate from pyruvate: step 1/1.</text>
</comment>
<comment type="subunit">
    <text evidence="1">Homotetramer.</text>
</comment>
<comment type="subcellular location">
    <subcellularLocation>
        <location evidence="1">Cytoplasm</location>
    </subcellularLocation>
</comment>
<comment type="similarity">
    <text evidence="3">Belongs to the LDH/MDH superfamily. LDH family.</text>
</comment>
<comment type="caution">
    <text evidence="4">Was originally thought to originate from S.undulatus.</text>
</comment>
<evidence type="ECO:0000250" key="1"/>
<evidence type="ECO:0000250" key="2">
    <source>
        <dbReference type="UniProtKB" id="P07195"/>
    </source>
</evidence>
<evidence type="ECO:0000305" key="3"/>
<evidence type="ECO:0000305" key="4">
    <source>
    </source>
</evidence>
<feature type="initiator methionine" description="Removed" evidence="1">
    <location>
        <position position="1"/>
    </location>
</feature>
<feature type="chain" id="PRO_0000168472" description="L-lactate dehydrogenase B chain">
    <location>
        <begin position="2"/>
        <end position="333"/>
    </location>
</feature>
<feature type="active site" description="Proton acceptor" evidence="1">
    <location>
        <position position="193"/>
    </location>
</feature>
<feature type="binding site" evidence="1">
    <location>
        <begin position="29"/>
        <end position="57"/>
    </location>
    <ligand>
        <name>NAD(+)</name>
        <dbReference type="ChEBI" id="CHEBI:57540"/>
    </ligand>
</feature>
<feature type="binding site" evidence="1">
    <location>
        <position position="99"/>
    </location>
    <ligand>
        <name>NAD(+)</name>
        <dbReference type="ChEBI" id="CHEBI:57540"/>
    </ligand>
</feature>
<feature type="binding site" evidence="1">
    <location>
        <position position="106"/>
    </location>
    <ligand>
        <name>substrate</name>
    </ligand>
</feature>
<feature type="binding site" evidence="1">
    <location>
        <position position="138"/>
    </location>
    <ligand>
        <name>NAD(+)</name>
        <dbReference type="ChEBI" id="CHEBI:57540"/>
    </ligand>
</feature>
<feature type="binding site" evidence="1">
    <location>
        <position position="138"/>
    </location>
    <ligand>
        <name>substrate</name>
    </ligand>
</feature>
<feature type="binding site" evidence="1">
    <location>
        <position position="169"/>
    </location>
    <ligand>
        <name>substrate</name>
    </ligand>
</feature>
<feature type="binding site" evidence="1">
    <location>
        <position position="248"/>
    </location>
    <ligand>
        <name>substrate</name>
    </ligand>
</feature>
<accession>P79913</accession>